<accession>Q06SG8</accession>
<keyword id="KW-0066">ATP synthesis</keyword>
<keyword id="KW-0138">CF(0)</keyword>
<keyword id="KW-0150">Chloroplast</keyword>
<keyword id="KW-0375">Hydrogen ion transport</keyword>
<keyword id="KW-0406">Ion transport</keyword>
<keyword id="KW-0472">Membrane</keyword>
<keyword id="KW-0934">Plastid</keyword>
<keyword id="KW-0793">Thylakoid</keyword>
<keyword id="KW-0812">Transmembrane</keyword>
<keyword id="KW-1133">Transmembrane helix</keyword>
<keyword id="KW-0813">Transport</keyword>
<protein>
    <recommendedName>
        <fullName evidence="1">ATP synthase subunit b, chloroplastic</fullName>
    </recommendedName>
    <alternativeName>
        <fullName evidence="1">ATP synthase F(0) sector subunit b</fullName>
    </alternativeName>
    <alternativeName>
        <fullName evidence="1">ATPase subunit I</fullName>
    </alternativeName>
</protein>
<feature type="chain" id="PRO_0000368982" description="ATP synthase subunit b, chloroplastic">
    <location>
        <begin position="1"/>
        <end position="170"/>
    </location>
</feature>
<feature type="transmembrane region" description="Helical" evidence="1">
    <location>
        <begin position="15"/>
        <end position="35"/>
    </location>
</feature>
<comment type="function">
    <text evidence="1">F(1)F(0) ATP synthase produces ATP from ADP in the presence of a proton or sodium gradient. F-type ATPases consist of two structural domains, F(1) containing the extramembraneous catalytic core and F(0) containing the membrane proton channel, linked together by a central stalk and a peripheral stalk. During catalysis, ATP synthesis in the catalytic domain of F(1) is coupled via a rotary mechanism of the central stalk subunits to proton translocation.</text>
</comment>
<comment type="function">
    <text evidence="1">Component of the F(0) channel, it forms part of the peripheral stalk, linking F(1) to F(0).</text>
</comment>
<comment type="subunit">
    <text evidence="1">F-type ATPases have 2 components, F(1) - the catalytic core - and F(0) - the membrane proton channel. F(1) has five subunits: alpha(3), beta(3), gamma(1), delta(1), epsilon(1). F(0) has four main subunits: a(1), b(1), b'(1) and c(10-14). The alpha and beta chains form an alternating ring which encloses part of the gamma chain. F(1) is attached to F(0) by a central stalk formed by the gamma and epsilon chains, while a peripheral stalk is formed by the delta, b and b' chains.</text>
</comment>
<comment type="subcellular location">
    <subcellularLocation>
        <location evidence="1">Plastid</location>
        <location evidence="1">Chloroplast thylakoid membrane</location>
        <topology evidence="1">Single-pass membrane protein</topology>
    </subcellularLocation>
</comment>
<comment type="miscellaneous">
    <text>In plastids the F-type ATPase is also known as CF(1)CF(0).</text>
</comment>
<comment type="similarity">
    <text evidence="1">Belongs to the ATPase B chain family.</text>
</comment>
<sequence>MSLPTGEGFGLNDNILETNVINLAVVVGVVVFFVGKNLTSILENRQETILNNLREADQRASEAREKFNKAKEQLELAEQKAKQIRSEGLLKATTEKNNCLTQYEQDLARLDEYKQETLQFYQQKVFSQLYVSLVSKALQKVKQKFDKRLDNQFHITVNNFFIARFTEYNP</sequence>
<dbReference type="EMBL" id="DQ630521">
    <property type="protein sequence ID" value="ABF60149.1"/>
    <property type="molecule type" value="Genomic_DNA"/>
</dbReference>
<dbReference type="RefSeq" id="YP_764398.1">
    <property type="nucleotide sequence ID" value="NC_008372.1"/>
</dbReference>
<dbReference type="SMR" id="Q06SG8"/>
<dbReference type="GeneID" id="4308392"/>
<dbReference type="GO" id="GO:0009535">
    <property type="term" value="C:chloroplast thylakoid membrane"/>
    <property type="evidence" value="ECO:0007669"/>
    <property type="project" value="UniProtKB-SubCell"/>
</dbReference>
<dbReference type="GO" id="GO:0045259">
    <property type="term" value="C:proton-transporting ATP synthase complex"/>
    <property type="evidence" value="ECO:0007669"/>
    <property type="project" value="UniProtKB-KW"/>
</dbReference>
<dbReference type="GO" id="GO:0046933">
    <property type="term" value="F:proton-transporting ATP synthase activity, rotational mechanism"/>
    <property type="evidence" value="ECO:0007669"/>
    <property type="project" value="UniProtKB-UniRule"/>
</dbReference>
<dbReference type="CDD" id="cd06503">
    <property type="entry name" value="ATP-synt_Fo_b"/>
    <property type="match status" value="1"/>
</dbReference>
<dbReference type="HAMAP" id="MF_01398">
    <property type="entry name" value="ATP_synth_b_bprime"/>
    <property type="match status" value="1"/>
</dbReference>
<dbReference type="InterPro" id="IPR002146">
    <property type="entry name" value="ATP_synth_b/b'su_bac/chlpt"/>
</dbReference>
<dbReference type="NCBIfam" id="NF005606">
    <property type="entry name" value="PRK07352.1"/>
    <property type="match status" value="1"/>
</dbReference>
<dbReference type="PANTHER" id="PTHR34264">
    <property type="entry name" value="ATP SYNTHASE SUBUNIT B, CHLOROPLASTIC"/>
    <property type="match status" value="1"/>
</dbReference>
<dbReference type="PANTHER" id="PTHR34264:SF3">
    <property type="entry name" value="ATP SYNTHASE SUBUNIT B, CHLOROPLASTIC"/>
    <property type="match status" value="1"/>
</dbReference>
<dbReference type="Pfam" id="PF00430">
    <property type="entry name" value="ATP-synt_B"/>
    <property type="match status" value="1"/>
</dbReference>
<proteinExistence type="inferred from homology"/>
<reference key="1">
    <citation type="journal article" date="2006" name="Mol. Genet. Genomics">
        <title>Distinctive architecture of the chloroplast genome in the chlorophycean green alga Stigeoclonium helveticum.</title>
        <authorList>
            <person name="Belanger A.-S."/>
            <person name="Brouard J.-S."/>
            <person name="Charlebois P."/>
            <person name="Otis C."/>
            <person name="Lemieux C."/>
            <person name="Turmel M."/>
        </authorList>
    </citation>
    <scope>NUCLEOTIDE SEQUENCE [LARGE SCALE GENOMIC DNA]</scope>
    <source>
        <strain>UTEX 441</strain>
    </source>
</reference>
<organism>
    <name type="scientific">Stigeoclonium helveticum</name>
    <name type="common">Green alga</name>
    <dbReference type="NCBI Taxonomy" id="55999"/>
    <lineage>
        <taxon>Eukaryota</taxon>
        <taxon>Viridiplantae</taxon>
        <taxon>Chlorophyta</taxon>
        <taxon>core chlorophytes</taxon>
        <taxon>Chlorophyceae</taxon>
        <taxon>OCC clade</taxon>
        <taxon>Chaetophorales</taxon>
        <taxon>Chaetophoraceae</taxon>
        <taxon>Stigeoclonium</taxon>
    </lineage>
</organism>
<geneLocation type="chloroplast"/>
<evidence type="ECO:0000255" key="1">
    <source>
        <dbReference type="HAMAP-Rule" id="MF_01398"/>
    </source>
</evidence>
<name>ATPF_STIHE</name>
<gene>
    <name evidence="1" type="primary">atpF</name>
</gene>